<keyword id="KW-1185">Reference proteome</keyword>
<reference key="1">
    <citation type="journal article" date="1994" name="Virology">
        <title>The complete DNA sequence of Autographa californica nuclear polyhedrosis virus.</title>
        <authorList>
            <person name="Ayres M.D."/>
            <person name="Howard S.C."/>
            <person name="Kuzio J."/>
            <person name="Lopez-Ferber M."/>
            <person name="Possee R.D."/>
        </authorList>
    </citation>
    <scope>NUCLEOTIDE SEQUENCE [LARGE SCALE GENOMIC DNA]</scope>
    <source>
        <strain>C6</strain>
    </source>
</reference>
<name>Y112_NPVAC</name>
<organism>
    <name type="scientific">Autographa californica nuclear polyhedrosis virus</name>
    <name type="common">AcMNPV</name>
    <dbReference type="NCBI Taxonomy" id="46015"/>
    <lineage>
        <taxon>Viruses</taxon>
        <taxon>Viruses incertae sedis</taxon>
        <taxon>Naldaviricetes</taxon>
        <taxon>Lefavirales</taxon>
        <taxon>Baculoviridae</taxon>
        <taxon>Alphabaculovirus</taxon>
        <taxon>Alphabaculovirus aucalifornicae</taxon>
    </lineage>
</organism>
<dbReference type="EMBL" id="L22858">
    <property type="protein sequence ID" value="AAA66742.1"/>
    <property type="molecule type" value="Genomic_DNA"/>
</dbReference>
<dbReference type="PIR" id="A72864">
    <property type="entry name" value="A72864"/>
</dbReference>
<dbReference type="RefSeq" id="NP_054142.1">
    <property type="nucleotide sequence ID" value="NC_001623.1"/>
</dbReference>
<dbReference type="GeneID" id="1403945"/>
<dbReference type="KEGG" id="vg:1403945"/>
<dbReference type="OrthoDB" id="14008at10239"/>
<dbReference type="Proteomes" id="UP000008292">
    <property type="component" value="Segment"/>
</dbReference>
<dbReference type="InterPro" id="IPR020387">
    <property type="entry name" value="AcMNPV_Orf112"/>
</dbReference>
<dbReference type="Pfam" id="PF10860">
    <property type="entry name" value="DUF2661"/>
    <property type="match status" value="1"/>
</dbReference>
<feature type="chain" id="PRO_0000133049" description="Uncharacterized 10.5 kDa protein in HE65-PK2 intergenic region">
    <location>
        <begin position="1"/>
        <end position="87"/>
    </location>
</feature>
<accession>P41665</accession>
<sequence length="87" mass="10460">MTKRQFALLFVWHHDNQFVCNTDEYPFWHNIEYHARRYKCIVLYCVENDGSLQLPVCKNINLINYKKAYPHYYGNCVDSIVKRAGKN</sequence>
<protein>
    <recommendedName>
        <fullName>Uncharacterized 10.5 kDa protein in HE65-PK2 intergenic region</fullName>
    </recommendedName>
</protein>
<proteinExistence type="predicted"/>
<organismHost>
    <name type="scientific">Lepidoptera</name>
    <name type="common">butterflies and moths</name>
    <dbReference type="NCBI Taxonomy" id="7088"/>
</organismHost>